<keyword id="KW-0133">Cell shape</keyword>
<keyword id="KW-0961">Cell wall biogenesis/degradation</keyword>
<keyword id="KW-0413">Isomerase</keyword>
<keyword id="KW-0573">Peptidoglycan synthesis</keyword>
<keyword id="KW-1185">Reference proteome</keyword>
<accession>A6Q504</accession>
<proteinExistence type="inferred from homology"/>
<comment type="function">
    <text evidence="1">Provides the (R)-glutamate required for cell wall biosynthesis.</text>
</comment>
<comment type="catalytic activity">
    <reaction evidence="1">
        <text>L-glutamate = D-glutamate</text>
        <dbReference type="Rhea" id="RHEA:12813"/>
        <dbReference type="ChEBI" id="CHEBI:29985"/>
        <dbReference type="ChEBI" id="CHEBI:29986"/>
        <dbReference type="EC" id="5.1.1.3"/>
    </reaction>
</comment>
<comment type="pathway">
    <text evidence="1">Cell wall biogenesis; peptidoglycan biosynthesis.</text>
</comment>
<comment type="similarity">
    <text evidence="1">Belongs to the aspartate/glutamate racemases family.</text>
</comment>
<feature type="chain" id="PRO_1000047591" description="Glutamate racemase">
    <location>
        <begin position="1"/>
        <end position="253"/>
    </location>
</feature>
<feature type="active site" description="Proton donor/acceptor" evidence="1">
    <location>
        <position position="70"/>
    </location>
</feature>
<feature type="active site" description="Proton donor/acceptor" evidence="1">
    <location>
        <position position="179"/>
    </location>
</feature>
<feature type="binding site" evidence="1">
    <location>
        <begin position="7"/>
        <end position="8"/>
    </location>
    <ligand>
        <name>substrate</name>
    </ligand>
</feature>
<feature type="binding site" evidence="1">
    <location>
        <begin position="39"/>
        <end position="40"/>
    </location>
    <ligand>
        <name>substrate</name>
    </ligand>
</feature>
<feature type="binding site" evidence="1">
    <location>
        <begin position="71"/>
        <end position="72"/>
    </location>
    <ligand>
        <name>substrate</name>
    </ligand>
</feature>
<feature type="binding site" evidence="1">
    <location>
        <begin position="180"/>
        <end position="181"/>
    </location>
    <ligand>
        <name>substrate</name>
    </ligand>
</feature>
<name>MURI_NITSB</name>
<evidence type="ECO:0000255" key="1">
    <source>
        <dbReference type="HAMAP-Rule" id="MF_00258"/>
    </source>
</evidence>
<dbReference type="EC" id="5.1.1.3" evidence="1"/>
<dbReference type="EMBL" id="AP009178">
    <property type="protein sequence ID" value="BAF70563.1"/>
    <property type="molecule type" value="Genomic_DNA"/>
</dbReference>
<dbReference type="RefSeq" id="WP_012082826.1">
    <property type="nucleotide sequence ID" value="NC_009662.1"/>
</dbReference>
<dbReference type="SMR" id="A6Q504"/>
<dbReference type="FunCoup" id="A6Q504">
    <property type="interactions" value="195"/>
</dbReference>
<dbReference type="STRING" id="387092.NIS_1456"/>
<dbReference type="KEGG" id="nis:NIS_1456"/>
<dbReference type="eggNOG" id="COG0796">
    <property type="taxonomic scope" value="Bacteria"/>
</dbReference>
<dbReference type="HOGENOM" id="CLU_052344_0_2_7"/>
<dbReference type="InParanoid" id="A6Q504"/>
<dbReference type="OrthoDB" id="9801055at2"/>
<dbReference type="UniPathway" id="UPA00219"/>
<dbReference type="Proteomes" id="UP000001118">
    <property type="component" value="Chromosome"/>
</dbReference>
<dbReference type="GO" id="GO:0008881">
    <property type="term" value="F:glutamate racemase activity"/>
    <property type="evidence" value="ECO:0007669"/>
    <property type="project" value="UniProtKB-UniRule"/>
</dbReference>
<dbReference type="GO" id="GO:0071555">
    <property type="term" value="P:cell wall organization"/>
    <property type="evidence" value="ECO:0007669"/>
    <property type="project" value="UniProtKB-KW"/>
</dbReference>
<dbReference type="GO" id="GO:0009252">
    <property type="term" value="P:peptidoglycan biosynthetic process"/>
    <property type="evidence" value="ECO:0007669"/>
    <property type="project" value="UniProtKB-UniRule"/>
</dbReference>
<dbReference type="GO" id="GO:0008360">
    <property type="term" value="P:regulation of cell shape"/>
    <property type="evidence" value="ECO:0007669"/>
    <property type="project" value="UniProtKB-KW"/>
</dbReference>
<dbReference type="Gene3D" id="3.40.50.1860">
    <property type="match status" value="2"/>
</dbReference>
<dbReference type="HAMAP" id="MF_00258">
    <property type="entry name" value="Glu_racemase"/>
    <property type="match status" value="1"/>
</dbReference>
<dbReference type="InterPro" id="IPR015942">
    <property type="entry name" value="Asp/Glu/hydantoin_racemase"/>
</dbReference>
<dbReference type="InterPro" id="IPR001920">
    <property type="entry name" value="Asp/Glu_race"/>
</dbReference>
<dbReference type="InterPro" id="IPR033134">
    <property type="entry name" value="Asp/Glu_racemase_AS_2"/>
</dbReference>
<dbReference type="InterPro" id="IPR004391">
    <property type="entry name" value="Glu_race"/>
</dbReference>
<dbReference type="NCBIfam" id="TIGR00067">
    <property type="entry name" value="glut_race"/>
    <property type="match status" value="1"/>
</dbReference>
<dbReference type="PANTHER" id="PTHR21198">
    <property type="entry name" value="GLUTAMATE RACEMASE"/>
    <property type="match status" value="1"/>
</dbReference>
<dbReference type="PANTHER" id="PTHR21198:SF2">
    <property type="entry name" value="GLUTAMATE RACEMASE"/>
    <property type="match status" value="1"/>
</dbReference>
<dbReference type="Pfam" id="PF01177">
    <property type="entry name" value="Asp_Glu_race"/>
    <property type="match status" value="1"/>
</dbReference>
<dbReference type="SUPFAM" id="SSF53681">
    <property type="entry name" value="Aspartate/glutamate racemase"/>
    <property type="match status" value="2"/>
</dbReference>
<dbReference type="PROSITE" id="PS00924">
    <property type="entry name" value="ASP_GLU_RACEMASE_2"/>
    <property type="match status" value="1"/>
</dbReference>
<reference key="1">
    <citation type="journal article" date="2007" name="Proc. Natl. Acad. Sci. U.S.A.">
        <title>Deep-sea vent epsilon-proteobacterial genomes provide insights into emergence of pathogens.</title>
        <authorList>
            <person name="Nakagawa S."/>
            <person name="Takaki Y."/>
            <person name="Shimamura S."/>
            <person name="Reysenbach A.-L."/>
            <person name="Takai K."/>
            <person name="Horikoshi K."/>
        </authorList>
    </citation>
    <scope>NUCLEOTIDE SEQUENCE [LARGE SCALE GENOMIC DNA]</scope>
    <source>
        <strain>SB155-2</strain>
    </source>
</reference>
<protein>
    <recommendedName>
        <fullName evidence="1">Glutamate racemase</fullName>
        <ecNumber evidence="1">5.1.1.3</ecNumber>
    </recommendedName>
</protein>
<gene>
    <name evidence="1" type="primary">murI</name>
    <name type="ordered locus">NIS_1456</name>
</gene>
<sequence length="253" mass="28008">MRAGVFDSGVGGLTVVKSLLEHGLFDEIIYFGDTARVPYGPKDKNTIIRYSLEAQEFFKNFDVDILITACNSVSAHAIEELRSNASFPVIGVIEPGVLALQNRGLDPKSQILVIGTQATIGSGKYQKLLREHGYNNILAKATPLFVPIVEEEIFEGPVLEATLQHYFDSLHPDAIILGCTHFPLIQDAIADYFNNEAVLIHSGEAIVEHLQKELGIKARKKTPSLKLFASENPEKLKKIAAHWLRDAFKTNEL</sequence>
<organism>
    <name type="scientific">Nitratiruptor sp. (strain SB155-2)</name>
    <dbReference type="NCBI Taxonomy" id="387092"/>
    <lineage>
        <taxon>Bacteria</taxon>
        <taxon>Pseudomonadati</taxon>
        <taxon>Campylobacterota</taxon>
        <taxon>Epsilonproteobacteria</taxon>
        <taxon>Nautiliales</taxon>
        <taxon>Nitratiruptoraceae</taxon>
        <taxon>Nitratiruptor</taxon>
    </lineage>
</organism>